<comment type="function">
    <text evidence="1">Required for the maintenance of the structure of the mitochondrial inner membrane. Involved in mitochondrial morphology. Causes growth arrest when highly overexpressed (By similarity).</text>
</comment>
<comment type="subunit">
    <text evidence="1">Homooligomer.</text>
</comment>
<comment type="subcellular location">
    <subcellularLocation>
        <location evidence="3">Mitochondrion inner membrane</location>
        <topology evidence="3">Multi-pass membrane protein</topology>
    </subcellularLocation>
</comment>
<comment type="similarity">
    <text evidence="4">Belongs to the SHE9 family.</text>
</comment>
<accession>Q9P6N3</accession>
<organism>
    <name type="scientific">Schizosaccharomyces pombe (strain 972 / ATCC 24843)</name>
    <name type="common">Fission yeast</name>
    <dbReference type="NCBI Taxonomy" id="284812"/>
    <lineage>
        <taxon>Eukaryota</taxon>
        <taxon>Fungi</taxon>
        <taxon>Dikarya</taxon>
        <taxon>Ascomycota</taxon>
        <taxon>Taphrinomycotina</taxon>
        <taxon>Schizosaccharomycetes</taxon>
        <taxon>Schizosaccharomycetales</taxon>
        <taxon>Schizosaccharomycetaceae</taxon>
        <taxon>Schizosaccharomyces</taxon>
    </lineage>
</organism>
<dbReference type="EMBL" id="CU329670">
    <property type="protein sequence ID" value="CAB90158.1"/>
    <property type="molecule type" value="Genomic_DNA"/>
</dbReference>
<dbReference type="RefSeq" id="NP_593840.1">
    <property type="nucleotide sequence ID" value="NM_001019269.2"/>
</dbReference>
<dbReference type="SMR" id="Q9P6N3"/>
<dbReference type="BioGRID" id="279658">
    <property type="interactions" value="11"/>
</dbReference>
<dbReference type="FunCoup" id="Q9P6N3">
    <property type="interactions" value="84"/>
</dbReference>
<dbReference type="STRING" id="284812.Q9P6N3"/>
<dbReference type="iPTMnet" id="Q9P6N3"/>
<dbReference type="PaxDb" id="4896-SPAC823.13c.1"/>
<dbReference type="EnsemblFungi" id="SPAC823.13c.1">
    <property type="protein sequence ID" value="SPAC823.13c.1:pep"/>
    <property type="gene ID" value="SPAC823.13c"/>
</dbReference>
<dbReference type="GeneID" id="2543230"/>
<dbReference type="KEGG" id="spo:2543230"/>
<dbReference type="PomBase" id="SPAC823.13c">
    <property type="gene designation" value="she9"/>
</dbReference>
<dbReference type="VEuPathDB" id="FungiDB:SPAC823.13c"/>
<dbReference type="eggNOG" id="ENOG502QQ1E">
    <property type="taxonomic scope" value="Eukaryota"/>
</dbReference>
<dbReference type="HOGENOM" id="CLU_025632_2_2_1"/>
<dbReference type="InParanoid" id="Q9P6N3"/>
<dbReference type="OMA" id="YREDYSN"/>
<dbReference type="PhylomeDB" id="Q9P6N3"/>
<dbReference type="PRO" id="PR:Q9P6N3"/>
<dbReference type="Proteomes" id="UP000002485">
    <property type="component" value="Chromosome I"/>
</dbReference>
<dbReference type="GO" id="GO:0005743">
    <property type="term" value="C:mitochondrial inner membrane"/>
    <property type="evidence" value="ECO:0000318"/>
    <property type="project" value="GO_Central"/>
</dbReference>
<dbReference type="GO" id="GO:0005739">
    <property type="term" value="C:mitochondrion"/>
    <property type="evidence" value="ECO:0007005"/>
    <property type="project" value="PomBase"/>
</dbReference>
<dbReference type="GO" id="GO:0007007">
    <property type="term" value="P:inner mitochondrial membrane organization"/>
    <property type="evidence" value="ECO:0000318"/>
    <property type="project" value="GO_Central"/>
</dbReference>
<dbReference type="InterPro" id="IPR008839">
    <property type="entry name" value="MDM33_fungi"/>
</dbReference>
<dbReference type="PANTHER" id="PTHR31961">
    <property type="entry name" value="SENSITIVE TO HIGH EXPRESSION PROTEIN 9, MITOCHONDRIAL"/>
    <property type="match status" value="1"/>
</dbReference>
<dbReference type="PANTHER" id="PTHR31961:SF3">
    <property type="entry name" value="SENSITIVE TO HIGH EXPRESSION PROTEIN 9, MITOCHONDRIAL"/>
    <property type="match status" value="1"/>
</dbReference>
<dbReference type="Pfam" id="PF05546">
    <property type="entry name" value="She9_MDM33"/>
    <property type="match status" value="1"/>
</dbReference>
<gene>
    <name type="primary">she9</name>
    <name type="ORF">SPAC823.13c</name>
</gene>
<keyword id="KW-0175">Coiled coil</keyword>
<keyword id="KW-0472">Membrane</keyword>
<keyword id="KW-0496">Mitochondrion</keyword>
<keyword id="KW-0999">Mitochondrion inner membrane</keyword>
<keyword id="KW-1185">Reference proteome</keyword>
<keyword id="KW-0809">Transit peptide</keyword>
<keyword id="KW-0812">Transmembrane</keyword>
<keyword id="KW-1133">Transmembrane helix</keyword>
<name>SHE9_SCHPO</name>
<evidence type="ECO:0000250" key="1"/>
<evidence type="ECO:0000255" key="2"/>
<evidence type="ECO:0000269" key="3">
    <source>
    </source>
</evidence>
<evidence type="ECO:0000305" key="4"/>
<proteinExistence type="inferred from homology"/>
<feature type="transit peptide" description="Mitochondrion" evidence="2">
    <location>
        <begin position="1"/>
        <end status="unknown"/>
    </location>
</feature>
<feature type="chain" id="PRO_0000351063" description="Sensitive to high expression protein 9 homolog, mitochondrial">
    <location>
        <begin status="unknown"/>
        <end position="317"/>
    </location>
</feature>
<feature type="topological domain" description="Mitochondrial matrix" evidence="2">
    <location>
        <begin status="unknown"/>
        <end position="165"/>
    </location>
</feature>
<feature type="transmembrane region" description="Helical" evidence="2">
    <location>
        <begin position="166"/>
        <end position="186"/>
    </location>
</feature>
<feature type="topological domain" description="Mitochondrial intermembrane" evidence="2">
    <location>
        <begin position="187"/>
        <end position="294"/>
    </location>
</feature>
<feature type="transmembrane region" description="Helical" evidence="2">
    <location>
        <begin position="295"/>
        <end position="315"/>
    </location>
</feature>
<feature type="topological domain" description="Mitochondrial matrix" evidence="2">
    <location>
        <begin position="316"/>
        <end position="317"/>
    </location>
</feature>
<feature type="coiled-coil region" evidence="2">
    <location>
        <begin position="45"/>
        <end position="145"/>
    </location>
</feature>
<sequence>MLQRLSQSIKGFAARFPKIYNKGNGSVQQTILQASQRLNELTGYSSIEALKNAVVKQETKLRDFRLSAAEARKRYIEAVEKRSSSQREVNELLQRRSSWSTIDLERFTKLYRDDYSNKEEEIKAQEDVDVAERRVEEAQNGLVRSILSRYHEEQVWSDKIRQASTWGTWGLMGINVVLFVVVQLILEPRKRKRLVREAVDHIDKERELEINDELKKISEKLDKKGEAVGQALELTSPKIDNKNLPKNSASLILPPINYDTFHSFLDSLKYFLSRFLSTDYRIQLTYRQLSILATKFTVGGGVIIYTFIHLFGLAFKR</sequence>
<protein>
    <recommendedName>
        <fullName>Sensitive to high expression protein 9 homolog, mitochondrial</fullName>
    </recommendedName>
</protein>
<reference key="1">
    <citation type="journal article" date="2002" name="Nature">
        <title>The genome sequence of Schizosaccharomyces pombe.</title>
        <authorList>
            <person name="Wood V."/>
            <person name="Gwilliam R."/>
            <person name="Rajandream M.A."/>
            <person name="Lyne M.H."/>
            <person name="Lyne R."/>
            <person name="Stewart A."/>
            <person name="Sgouros J.G."/>
            <person name="Peat N."/>
            <person name="Hayles J."/>
            <person name="Baker S.G."/>
            <person name="Basham D."/>
            <person name="Bowman S."/>
            <person name="Brooks K."/>
            <person name="Brown D."/>
            <person name="Brown S."/>
            <person name="Chillingworth T."/>
            <person name="Churcher C.M."/>
            <person name="Collins M."/>
            <person name="Connor R."/>
            <person name="Cronin A."/>
            <person name="Davis P."/>
            <person name="Feltwell T."/>
            <person name="Fraser A."/>
            <person name="Gentles S."/>
            <person name="Goble A."/>
            <person name="Hamlin N."/>
            <person name="Harris D.E."/>
            <person name="Hidalgo J."/>
            <person name="Hodgson G."/>
            <person name="Holroyd S."/>
            <person name="Hornsby T."/>
            <person name="Howarth S."/>
            <person name="Huckle E.J."/>
            <person name="Hunt S."/>
            <person name="Jagels K."/>
            <person name="James K.D."/>
            <person name="Jones L."/>
            <person name="Jones M."/>
            <person name="Leather S."/>
            <person name="McDonald S."/>
            <person name="McLean J."/>
            <person name="Mooney P."/>
            <person name="Moule S."/>
            <person name="Mungall K.L."/>
            <person name="Murphy L.D."/>
            <person name="Niblett D."/>
            <person name="Odell C."/>
            <person name="Oliver K."/>
            <person name="O'Neil S."/>
            <person name="Pearson D."/>
            <person name="Quail M.A."/>
            <person name="Rabbinowitsch E."/>
            <person name="Rutherford K.M."/>
            <person name="Rutter S."/>
            <person name="Saunders D."/>
            <person name="Seeger K."/>
            <person name="Sharp S."/>
            <person name="Skelton J."/>
            <person name="Simmonds M.N."/>
            <person name="Squares R."/>
            <person name="Squares S."/>
            <person name="Stevens K."/>
            <person name="Taylor K."/>
            <person name="Taylor R.G."/>
            <person name="Tivey A."/>
            <person name="Walsh S.V."/>
            <person name="Warren T."/>
            <person name="Whitehead S."/>
            <person name="Woodward J.R."/>
            <person name="Volckaert G."/>
            <person name="Aert R."/>
            <person name="Robben J."/>
            <person name="Grymonprez B."/>
            <person name="Weltjens I."/>
            <person name="Vanstreels E."/>
            <person name="Rieger M."/>
            <person name="Schaefer M."/>
            <person name="Mueller-Auer S."/>
            <person name="Gabel C."/>
            <person name="Fuchs M."/>
            <person name="Duesterhoeft A."/>
            <person name="Fritzc C."/>
            <person name="Holzer E."/>
            <person name="Moestl D."/>
            <person name="Hilbert H."/>
            <person name="Borzym K."/>
            <person name="Langer I."/>
            <person name="Beck A."/>
            <person name="Lehrach H."/>
            <person name="Reinhardt R."/>
            <person name="Pohl T.M."/>
            <person name="Eger P."/>
            <person name="Zimmermann W."/>
            <person name="Wedler H."/>
            <person name="Wambutt R."/>
            <person name="Purnelle B."/>
            <person name="Goffeau A."/>
            <person name="Cadieu E."/>
            <person name="Dreano S."/>
            <person name="Gloux S."/>
            <person name="Lelaure V."/>
            <person name="Mottier S."/>
            <person name="Galibert F."/>
            <person name="Aves S.J."/>
            <person name="Xiang Z."/>
            <person name="Hunt C."/>
            <person name="Moore K."/>
            <person name="Hurst S.M."/>
            <person name="Lucas M."/>
            <person name="Rochet M."/>
            <person name="Gaillardin C."/>
            <person name="Tallada V.A."/>
            <person name="Garzon A."/>
            <person name="Thode G."/>
            <person name="Daga R.R."/>
            <person name="Cruzado L."/>
            <person name="Jimenez J."/>
            <person name="Sanchez M."/>
            <person name="del Rey F."/>
            <person name="Benito J."/>
            <person name="Dominguez A."/>
            <person name="Revuelta J.L."/>
            <person name="Moreno S."/>
            <person name="Armstrong J."/>
            <person name="Forsburg S.L."/>
            <person name="Cerutti L."/>
            <person name="Lowe T."/>
            <person name="McCombie W.R."/>
            <person name="Paulsen I."/>
            <person name="Potashkin J."/>
            <person name="Shpakovski G.V."/>
            <person name="Ussery D."/>
            <person name="Barrell B.G."/>
            <person name="Nurse P."/>
        </authorList>
    </citation>
    <scope>NUCLEOTIDE SEQUENCE [LARGE SCALE GENOMIC DNA]</scope>
    <source>
        <strain>972 / ATCC 24843</strain>
    </source>
</reference>
<reference key="2">
    <citation type="journal article" date="2006" name="Nat. Biotechnol.">
        <title>ORFeome cloning and global analysis of protein localization in the fission yeast Schizosaccharomyces pombe.</title>
        <authorList>
            <person name="Matsuyama A."/>
            <person name="Arai R."/>
            <person name="Yashiroda Y."/>
            <person name="Shirai A."/>
            <person name="Kamata A."/>
            <person name="Sekido S."/>
            <person name="Kobayashi Y."/>
            <person name="Hashimoto A."/>
            <person name="Hamamoto M."/>
            <person name="Hiraoka Y."/>
            <person name="Horinouchi S."/>
            <person name="Yoshida M."/>
        </authorList>
    </citation>
    <scope>SUBCELLULAR LOCATION [LARGE SCALE ANALYSIS]</scope>
</reference>